<accession>Q2V4L8</accession>
<accession>O23134</accession>
<keyword id="KW-0025">Alternative splicing</keyword>
<keyword id="KW-0119">Carbohydrate metabolism</keyword>
<keyword id="KW-0961">Cell wall biogenesis/degradation</keyword>
<keyword id="KW-0136">Cellulose degradation</keyword>
<keyword id="KW-0325">Glycoprotein</keyword>
<keyword id="KW-0326">Glycosidase</keyword>
<keyword id="KW-0378">Hydrolase</keyword>
<keyword id="KW-0624">Polysaccharide degradation</keyword>
<keyword id="KW-1185">Reference proteome</keyword>
<keyword id="KW-0964">Secreted</keyword>
<keyword id="KW-0732">Signal</keyword>
<organism>
    <name type="scientific">Arabidopsis thaliana</name>
    <name type="common">Mouse-ear cress</name>
    <dbReference type="NCBI Taxonomy" id="3702"/>
    <lineage>
        <taxon>Eukaryota</taxon>
        <taxon>Viridiplantae</taxon>
        <taxon>Streptophyta</taxon>
        <taxon>Embryophyta</taxon>
        <taxon>Tracheophyta</taxon>
        <taxon>Spermatophyta</taxon>
        <taxon>Magnoliopsida</taxon>
        <taxon>eudicotyledons</taxon>
        <taxon>Gunneridae</taxon>
        <taxon>Pentapetalae</taxon>
        <taxon>rosids</taxon>
        <taxon>malvids</taxon>
        <taxon>Brassicales</taxon>
        <taxon>Brassicaceae</taxon>
        <taxon>Camelineae</taxon>
        <taxon>Arabidopsis</taxon>
    </lineage>
</organism>
<dbReference type="EC" id="3.2.1.4"/>
<dbReference type="EMBL" id="AF000657">
    <property type="protein sequence ID" value="AAB72171.1"/>
    <property type="molecule type" value="Genomic_DNA"/>
</dbReference>
<dbReference type="EMBL" id="CP002684">
    <property type="protein sequence ID" value="AEE30299.1"/>
    <property type="molecule type" value="Genomic_DNA"/>
</dbReference>
<dbReference type="EMBL" id="CP002684">
    <property type="protein sequence ID" value="AEE30300.1"/>
    <property type="molecule type" value="Genomic_DNA"/>
</dbReference>
<dbReference type="PIR" id="G86362">
    <property type="entry name" value="G86362"/>
</dbReference>
<dbReference type="RefSeq" id="NP_001031082.1">
    <molecule id="Q2V4L8-2"/>
    <property type="nucleotide sequence ID" value="NM_001036005.2"/>
</dbReference>
<dbReference type="RefSeq" id="NP_173701.1">
    <molecule id="Q2V4L8-1"/>
    <property type="nucleotide sequence ID" value="NM_102134.3"/>
</dbReference>
<dbReference type="SMR" id="Q2V4L8"/>
<dbReference type="FunCoup" id="Q2V4L8">
    <property type="interactions" value="178"/>
</dbReference>
<dbReference type="STRING" id="3702.Q2V4L8"/>
<dbReference type="CAZy" id="GH9">
    <property type="family name" value="Glycoside Hydrolase Family 9"/>
</dbReference>
<dbReference type="GlyCosmos" id="Q2V4L8">
    <property type="glycosylation" value="1 site, No reported glycans"/>
</dbReference>
<dbReference type="GlyGen" id="Q2V4L8">
    <property type="glycosylation" value="2 sites"/>
</dbReference>
<dbReference type="PaxDb" id="3702-AT1G22880.1"/>
<dbReference type="ProteomicsDB" id="247241">
    <molecule id="Q2V4L8-1"/>
</dbReference>
<dbReference type="EnsemblPlants" id="AT1G22880.1">
    <molecule id="Q2V4L8-1"/>
    <property type="protein sequence ID" value="AT1G22880.1"/>
    <property type="gene ID" value="AT1G22880"/>
</dbReference>
<dbReference type="EnsemblPlants" id="AT1G22880.2">
    <molecule id="Q2V4L8-2"/>
    <property type="protein sequence ID" value="AT1G22880.2"/>
    <property type="gene ID" value="AT1G22880"/>
</dbReference>
<dbReference type="GeneID" id="838893"/>
<dbReference type="Gramene" id="AT1G22880.1">
    <molecule id="Q2V4L8-1"/>
    <property type="protein sequence ID" value="AT1G22880.1"/>
    <property type="gene ID" value="AT1G22880"/>
</dbReference>
<dbReference type="Gramene" id="AT1G22880.2">
    <molecule id="Q2V4L8-2"/>
    <property type="protein sequence ID" value="AT1G22880.2"/>
    <property type="gene ID" value="AT1G22880"/>
</dbReference>
<dbReference type="KEGG" id="ath:AT1G22880"/>
<dbReference type="Araport" id="AT1G22880"/>
<dbReference type="TAIR" id="AT1G22880">
    <property type="gene designation" value="CEL5"/>
</dbReference>
<dbReference type="eggNOG" id="ENOG502QRXS">
    <property type="taxonomic scope" value="Eukaryota"/>
</dbReference>
<dbReference type="HOGENOM" id="CLU_008926_1_2_1"/>
<dbReference type="InParanoid" id="Q2V4L8"/>
<dbReference type="OMA" id="WSANYLL"/>
<dbReference type="PhylomeDB" id="Q2V4L8"/>
<dbReference type="BioCyc" id="ARA:AT1G22880-MONOMER"/>
<dbReference type="PRO" id="PR:Q2V4L8"/>
<dbReference type="Proteomes" id="UP000006548">
    <property type="component" value="Chromosome 1"/>
</dbReference>
<dbReference type="ExpressionAtlas" id="Q2V4L8">
    <property type="expression patterns" value="baseline and differential"/>
</dbReference>
<dbReference type="GO" id="GO:0005576">
    <property type="term" value="C:extracellular region"/>
    <property type="evidence" value="ECO:0007669"/>
    <property type="project" value="UniProtKB-SubCell"/>
</dbReference>
<dbReference type="GO" id="GO:0005794">
    <property type="term" value="C:Golgi apparatus"/>
    <property type="evidence" value="ECO:0007005"/>
    <property type="project" value="TAIR"/>
</dbReference>
<dbReference type="GO" id="GO:0009505">
    <property type="term" value="C:plant-type cell wall"/>
    <property type="evidence" value="ECO:0007005"/>
    <property type="project" value="TAIR"/>
</dbReference>
<dbReference type="GO" id="GO:0008810">
    <property type="term" value="F:cellulase activity"/>
    <property type="evidence" value="ECO:0007669"/>
    <property type="project" value="UniProtKB-EC"/>
</dbReference>
<dbReference type="GO" id="GO:0071555">
    <property type="term" value="P:cell wall organization"/>
    <property type="evidence" value="ECO:0007669"/>
    <property type="project" value="UniProtKB-KW"/>
</dbReference>
<dbReference type="GO" id="GO:0030245">
    <property type="term" value="P:cellulose catabolic process"/>
    <property type="evidence" value="ECO:0007669"/>
    <property type="project" value="UniProtKB-KW"/>
</dbReference>
<dbReference type="FunFam" id="1.50.10.10:FF:000020">
    <property type="entry name" value="Endoglucanase"/>
    <property type="match status" value="1"/>
</dbReference>
<dbReference type="Gene3D" id="1.50.10.10">
    <property type="match status" value="1"/>
</dbReference>
<dbReference type="InterPro" id="IPR008928">
    <property type="entry name" value="6-hairpin_glycosidase_sf"/>
</dbReference>
<dbReference type="InterPro" id="IPR012341">
    <property type="entry name" value="6hp_glycosidase-like_sf"/>
</dbReference>
<dbReference type="InterPro" id="IPR001701">
    <property type="entry name" value="Glyco_hydro_9"/>
</dbReference>
<dbReference type="InterPro" id="IPR033126">
    <property type="entry name" value="Glyco_hydro_9_Asp/Glu_AS"/>
</dbReference>
<dbReference type="InterPro" id="IPR018221">
    <property type="entry name" value="Glyco_hydro_9_His_AS"/>
</dbReference>
<dbReference type="PANTHER" id="PTHR22298">
    <property type="entry name" value="ENDO-1,4-BETA-GLUCANASE"/>
    <property type="match status" value="1"/>
</dbReference>
<dbReference type="Pfam" id="PF00759">
    <property type="entry name" value="Glyco_hydro_9"/>
    <property type="match status" value="1"/>
</dbReference>
<dbReference type="SUPFAM" id="SSF48208">
    <property type="entry name" value="Six-hairpin glycosidases"/>
    <property type="match status" value="1"/>
</dbReference>
<dbReference type="PROSITE" id="PS60032">
    <property type="entry name" value="GH9_1"/>
    <property type="match status" value="1"/>
</dbReference>
<dbReference type="PROSITE" id="PS00592">
    <property type="entry name" value="GH9_2"/>
    <property type="match status" value="1"/>
</dbReference>
<dbReference type="PROSITE" id="PS00698">
    <property type="entry name" value="GH9_3"/>
    <property type="match status" value="1"/>
</dbReference>
<comment type="function">
    <text evidence="6">May be involved in the sloughing (cell-cell separation) of the root cap cells from root tip.</text>
</comment>
<comment type="catalytic activity">
    <reaction>
        <text>Endohydrolysis of (1-&gt;4)-beta-D-glucosidic linkages in cellulose, lichenin and cereal beta-D-glucans.</text>
        <dbReference type="EC" id="3.2.1.4"/>
    </reaction>
</comment>
<comment type="subcellular location">
    <subcellularLocation>
        <location evidence="1">Secreted</location>
    </subcellularLocation>
</comment>
<comment type="alternative products">
    <event type="alternative splicing"/>
    <isoform>
        <id>Q2V4L8-1</id>
        <name>1</name>
        <sequence type="displayed"/>
    </isoform>
    <isoform>
        <id>Q2V4L8-2</id>
        <name>2</name>
        <sequence type="described" ref="VSP_020386"/>
    </isoform>
</comment>
<comment type="tissue specificity">
    <text evidence="6">Specifically expressed in root cap cells.</text>
</comment>
<comment type="induction">
    <text evidence="6">Down-regulated by auxin (IAA) and abscisic acid (ABA).</text>
</comment>
<comment type="miscellaneous">
    <text>The sloughing of root-cap cells from the root tip is a process of cell-cell separation that entails cell wall break down. It is important in plant development because it assists the growing root in penetrating the soil.</text>
</comment>
<comment type="similarity">
    <text evidence="5 7">Belongs to the glycosyl hydrolase 9 (cellulase E) family.</text>
</comment>
<name>GUN3_ARATH</name>
<reference key="1">
    <citation type="journal article" date="2000" name="Nature">
        <title>Sequence and analysis of chromosome 1 of the plant Arabidopsis thaliana.</title>
        <authorList>
            <person name="Theologis A."/>
            <person name="Ecker J.R."/>
            <person name="Palm C.J."/>
            <person name="Federspiel N.A."/>
            <person name="Kaul S."/>
            <person name="White O."/>
            <person name="Alonso J."/>
            <person name="Altafi H."/>
            <person name="Araujo R."/>
            <person name="Bowman C.L."/>
            <person name="Brooks S.Y."/>
            <person name="Buehler E."/>
            <person name="Chan A."/>
            <person name="Chao Q."/>
            <person name="Chen H."/>
            <person name="Cheuk R.F."/>
            <person name="Chin C.W."/>
            <person name="Chung M.K."/>
            <person name="Conn L."/>
            <person name="Conway A.B."/>
            <person name="Conway A.R."/>
            <person name="Creasy T.H."/>
            <person name="Dewar K."/>
            <person name="Dunn P."/>
            <person name="Etgu P."/>
            <person name="Feldblyum T.V."/>
            <person name="Feng J.-D."/>
            <person name="Fong B."/>
            <person name="Fujii C.Y."/>
            <person name="Gill J.E."/>
            <person name="Goldsmith A.D."/>
            <person name="Haas B."/>
            <person name="Hansen N.F."/>
            <person name="Hughes B."/>
            <person name="Huizar L."/>
            <person name="Hunter J.L."/>
            <person name="Jenkins J."/>
            <person name="Johnson-Hopson C."/>
            <person name="Khan S."/>
            <person name="Khaykin E."/>
            <person name="Kim C.J."/>
            <person name="Koo H.L."/>
            <person name="Kremenetskaia I."/>
            <person name="Kurtz D.B."/>
            <person name="Kwan A."/>
            <person name="Lam B."/>
            <person name="Langin-Hooper S."/>
            <person name="Lee A."/>
            <person name="Lee J.M."/>
            <person name="Lenz C.A."/>
            <person name="Li J.H."/>
            <person name="Li Y.-P."/>
            <person name="Lin X."/>
            <person name="Liu S.X."/>
            <person name="Liu Z.A."/>
            <person name="Luros J.S."/>
            <person name="Maiti R."/>
            <person name="Marziali A."/>
            <person name="Militscher J."/>
            <person name="Miranda M."/>
            <person name="Nguyen M."/>
            <person name="Nierman W.C."/>
            <person name="Osborne B.I."/>
            <person name="Pai G."/>
            <person name="Peterson J."/>
            <person name="Pham P.K."/>
            <person name="Rizzo M."/>
            <person name="Rooney T."/>
            <person name="Rowley D."/>
            <person name="Sakano H."/>
            <person name="Salzberg S.L."/>
            <person name="Schwartz J.R."/>
            <person name="Shinn P."/>
            <person name="Southwick A.M."/>
            <person name="Sun H."/>
            <person name="Tallon L.J."/>
            <person name="Tambunga G."/>
            <person name="Toriumi M.J."/>
            <person name="Town C.D."/>
            <person name="Utterback T."/>
            <person name="Van Aken S."/>
            <person name="Vaysberg M."/>
            <person name="Vysotskaia V.S."/>
            <person name="Walker M."/>
            <person name="Wu D."/>
            <person name="Yu G."/>
            <person name="Fraser C.M."/>
            <person name="Venter J.C."/>
            <person name="Davis R.W."/>
        </authorList>
    </citation>
    <scope>NUCLEOTIDE SEQUENCE [LARGE SCALE GENOMIC DNA]</scope>
    <source>
        <strain>cv. Columbia</strain>
    </source>
</reference>
<reference key="2">
    <citation type="journal article" date="2017" name="Plant J.">
        <title>Araport11: a complete reannotation of the Arabidopsis thaliana reference genome.</title>
        <authorList>
            <person name="Cheng C.Y."/>
            <person name="Krishnakumar V."/>
            <person name="Chan A.P."/>
            <person name="Thibaud-Nissen F."/>
            <person name="Schobel S."/>
            <person name="Town C.D."/>
        </authorList>
    </citation>
    <scope>GENOME REANNOTATION</scope>
    <source>
        <strain>cv. Columbia</strain>
    </source>
</reference>
<reference key="3">
    <citation type="journal article" date="2004" name="J. Mol. Evol.">
        <title>Phylogenetic analysis of the plant endo-beta-1,4-glucanase gene family.</title>
        <authorList>
            <person name="Libertini E."/>
            <person name="Li Y."/>
            <person name="McQueen-Mason S.J."/>
        </authorList>
    </citation>
    <scope>GENE FAMILY</scope>
</reference>
<reference key="4">
    <citation type="journal article" date="2004" name="Plant Mol. Biol.">
        <title>Root cap specific expression of an endo-beta-1,4-D-glucanase (cellulase): a new marker to study root development in Arabidopsis.</title>
        <authorList>
            <person name="del Campillo E."/>
            <person name="Abdel-Aziz A."/>
            <person name="Crawford D."/>
            <person name="Patterson S.E."/>
        </authorList>
    </citation>
    <scope>FUNCTION</scope>
    <scope>TISSUE SPECIFICITY</scope>
    <scope>INDUCTION</scope>
</reference>
<gene>
    <name type="primary">CEL5</name>
    <name type="ordered locus">At1g22880</name>
    <name type="ORF">F19G10.16</name>
</gene>
<protein>
    <recommendedName>
        <fullName>Endoglucanase 3</fullName>
        <ecNumber>3.2.1.4</ecNumber>
    </recommendedName>
    <alternativeName>
        <fullName>Cellulase 5</fullName>
        <shortName>AtCEL5</shortName>
    </alternativeName>
    <alternativeName>
        <fullName>Endo-1,4-beta glucanase 3</fullName>
    </alternativeName>
</protein>
<sequence length="484" mass="53662">MASPFFFVFLLSALSLENTYASPNYREALSKSLLFFQGQRSGRLPSDQQLSWRSSSGLSDGSSAHVDLTGGYYDAGDNVKFNFPMAFTTTMLSWSSLEYGKKMGPELQNSRVAIRWATDYLLKCARATPGKLYVGVGDPNGDHKCWERPEDMDTPRTVYSVSPSNPGSDVAAETAAALAASSMVFRKVDPKYSRLLLATAKKVMQFAIQYRGAYSNSLSSSVCPFYCSYSGYKDELLWGAAWLHRATNDPYYTNFIKSLGGGDQPDIFSWDNKYAGAYVLLSRRAVLNKDNNFELYKQAAENFMCKILPNSPSSSTKYTKGGLMYKLPQSNLQYVTSITFLLTTYAKYMKSTKQTFNCGNSLIVPNALINLSKRQVDYVLGVNPMKMSYMVGFSSNFPKRIHHRGSSLPSRAVRSNSLGCNGGFQSFRTQNPNPNILTGAIVGGPNQNDEYPDQRDDYTRSEPATYINAAFVGPLAYFAASRSP</sequence>
<proteinExistence type="evidence at transcript level"/>
<evidence type="ECO:0000250" key="1"/>
<evidence type="ECO:0000255" key="2"/>
<evidence type="ECO:0000255" key="3">
    <source>
        <dbReference type="PROSITE-ProRule" id="PRU10059"/>
    </source>
</evidence>
<evidence type="ECO:0000255" key="4">
    <source>
        <dbReference type="PROSITE-ProRule" id="PRU10060"/>
    </source>
</evidence>
<evidence type="ECO:0000255" key="5">
    <source>
        <dbReference type="PROSITE-ProRule" id="PRU10140"/>
    </source>
</evidence>
<evidence type="ECO:0000269" key="6">
    <source>
    </source>
</evidence>
<evidence type="ECO:0000305" key="7"/>
<feature type="signal peptide" evidence="2">
    <location>
        <begin position="1"/>
        <end position="21"/>
    </location>
</feature>
<feature type="chain" id="PRO_0000249256" description="Endoglucanase 3">
    <location>
        <begin position="22"/>
        <end position="484"/>
    </location>
</feature>
<feature type="active site" description="Nucleophile" evidence="5">
    <location>
        <position position="77"/>
    </location>
</feature>
<feature type="active site" evidence="3">
    <location>
        <position position="402"/>
    </location>
</feature>
<feature type="active site" evidence="4">
    <location>
        <position position="453"/>
    </location>
</feature>
<feature type="active site" evidence="4">
    <location>
        <position position="462"/>
    </location>
</feature>
<feature type="glycosylation site" description="N-linked (GlcNAc...) asparagine" evidence="2">
    <location>
        <position position="370"/>
    </location>
</feature>
<feature type="splice variant" id="VSP_020386" description="In isoform 2." evidence="7">
    <location>
        <begin position="1"/>
        <end position="84"/>
    </location>
</feature>